<accession>Q3MIR4</accession>
<accession>B3KR84</accession>
<accession>Q14D00</accession>
<name>CC50B_HUMAN</name>
<sequence>MTWSATARGAHQPDNTAFTQQRLPAWQPLLSASIALPLFFCAGLAFIGLGLGLYYSSNGIKELEYDYTGDPGTGNCSVCAAAGQGRALPPPCSCAWYFSLPELFQGPVYLYYELTNFYQNNRRYGVSRDDAQLSGLPSALRHPVNECAPYQRSAAGLPIAPCGAIANSLFNDSFSLWHQRQPGGPYVEVPLDRSGIAWWTDYHVKFRNPPLVNGSLALAFQGTAPPPNWRRPVYELSPDPNNTGFINQDFVVWMRTAALPTFRKLYARIRQGNYSAGLPRGAYRVNITYNYPVRAFGGHKLLIFSSISWMGGKNPFLGIAYLVVGSLCILTGFVMLVVYIRYQDQDDDDEE</sequence>
<keyword id="KW-0002">3D-structure</keyword>
<keyword id="KW-1003">Cell membrane</keyword>
<keyword id="KW-0325">Glycoprotein</keyword>
<keyword id="KW-0445">Lipid transport</keyword>
<keyword id="KW-0472">Membrane</keyword>
<keyword id="KW-1267">Proteomics identification</keyword>
<keyword id="KW-1185">Reference proteome</keyword>
<keyword id="KW-0812">Transmembrane</keyword>
<keyword id="KW-1133">Transmembrane helix</keyword>
<keyword id="KW-0813">Transport</keyword>
<comment type="function">
    <text evidence="3 5">Accessory component of a P4-ATPase flippase complex which catalyzes the hydrolysis of ATP coupled to the transport of aminophospholipids from the outer to the inner leaflet of various membranes and ensures the maintenance of asymmetric distribution of phospholipids. Phospholipid translocation also seems to be implicated in vesicle formation and in uptake of lipid signaling molecules. The beta subunit may assist in binding of the phospholipid substrate (Probable). Can mediate the export of alpha subunits ATP8A1, ATP8B1, ATP8B2 and ATP8B4 from the ER to the plasma membrane.</text>
</comment>
<comment type="subunit">
    <text evidence="2 3 4 5">Component of a P4-ATPase flippase complex which consists of a catalytic alpha subunit and an accessory beta subunit (Probable). Interacts with alpha subunits ATP8A1, ATP8B1, ATP8B2 and ATP8B4.</text>
</comment>
<comment type="interaction">
    <interactant intactId="EBI-9527107">
        <id>Q3MIR4</id>
    </interactant>
    <interactant intactId="EBI-9524729">
        <id>O43520</id>
        <label>ATP8B1</label>
    </interactant>
    <organismsDiffer>false</organismsDiffer>
    <experiments>5</experiments>
</comment>
<comment type="interaction">
    <interactant intactId="EBI-9527107">
        <id>Q3MIR4</id>
    </interactant>
    <interactant intactId="EBI-9539266">
        <id>P98198</id>
        <label>ATP8B2</label>
    </interactant>
    <organismsDiffer>false</organismsDiffer>
    <experiments>3</experiments>
</comment>
<comment type="interaction">
    <interactant intactId="EBI-9527107">
        <id>Q3MIR4</id>
    </interactant>
    <interactant intactId="EBI-18076404">
        <id>O15529</id>
        <label>GPR42</label>
    </interactant>
    <organismsDiffer>false</organismsDiffer>
    <experiments>3</experiments>
</comment>
<comment type="interaction">
    <interactant intactId="EBI-9527107">
        <id>Q3MIR4</id>
    </interactant>
    <interactant intactId="EBI-2845982">
        <id>Q01453</id>
        <label>PMP22</label>
    </interactant>
    <organismsDiffer>false</organismsDiffer>
    <experiments>3</experiments>
</comment>
<comment type="interaction">
    <interactant intactId="EBI-9527107">
        <id>Q3MIR4</id>
    </interactant>
    <interactant intactId="EBI-2684237">
        <id>O00767</id>
        <label>SCD</label>
    </interactant>
    <organismsDiffer>false</organismsDiffer>
    <experiments>3</experiments>
</comment>
<comment type="interaction">
    <interactant intactId="EBI-9527107">
        <id>Q3MIR4</id>
    </interactant>
    <interactant intactId="EBI-10197617">
        <id>P11686</id>
        <label>SFTPC</label>
    </interactant>
    <organismsDiffer>false</organismsDiffer>
    <experiments>3</experiments>
</comment>
<comment type="subcellular location">
    <subcellularLocation>
        <location evidence="3">Cell membrane</location>
        <topology evidence="3">Multi-pass membrane protein</topology>
    </subcellularLocation>
</comment>
<comment type="similarity">
    <text evidence="5">Belongs to the CDC50/LEM3 family.</text>
</comment>
<gene>
    <name type="primary">TMEM30B</name>
    <name type="synonym">CDC50B</name>
</gene>
<dbReference type="EMBL" id="AK091169">
    <property type="protein sequence ID" value="BAG52296.1"/>
    <property type="molecule type" value="mRNA"/>
</dbReference>
<dbReference type="EMBL" id="CH471061">
    <property type="protein sequence ID" value="EAW80799.1"/>
    <property type="molecule type" value="Genomic_DNA"/>
</dbReference>
<dbReference type="EMBL" id="BC101726">
    <property type="protein sequence ID" value="AAI01727.1"/>
    <property type="molecule type" value="mRNA"/>
</dbReference>
<dbReference type="EMBL" id="BC113559">
    <property type="protein sequence ID" value="AAI13560.1"/>
    <property type="molecule type" value="mRNA"/>
</dbReference>
<dbReference type="CCDS" id="CCDS32093.1"/>
<dbReference type="RefSeq" id="NP_001017970.1">
    <property type="nucleotide sequence ID" value="NM_001017970.3"/>
</dbReference>
<dbReference type="PDB" id="7VGH">
    <property type="method" value="EM"/>
    <property type="resolution" value="3.39 A"/>
    <property type="chains" value="A=1-351"/>
</dbReference>
<dbReference type="PDBsum" id="7VGH"/>
<dbReference type="EMDB" id="EMD-31969"/>
<dbReference type="SMR" id="Q3MIR4"/>
<dbReference type="BioGRID" id="127780">
    <property type="interactions" value="275"/>
</dbReference>
<dbReference type="ComplexPortal" id="CPX-6283">
    <property type="entry name" value="ATP8B1-CDC50B P4-ATPase complex"/>
</dbReference>
<dbReference type="ComplexPortal" id="CPX-6286">
    <property type="entry name" value="ATP8A1-CDC50B P4-ATPase complex"/>
</dbReference>
<dbReference type="ComplexPortal" id="CPX-6303">
    <property type="entry name" value="ATP8B2-CDC50B P4-ATPase complex"/>
</dbReference>
<dbReference type="ComplexPortal" id="CPX-6306">
    <property type="entry name" value="ATP8B4-CDC50B P4-ATPase complex"/>
</dbReference>
<dbReference type="FunCoup" id="Q3MIR4">
    <property type="interactions" value="247"/>
</dbReference>
<dbReference type="IntAct" id="Q3MIR4">
    <property type="interactions" value="90"/>
</dbReference>
<dbReference type="STRING" id="9606.ENSP00000450842"/>
<dbReference type="TCDB" id="8.A.27.1.6">
    <property type="family name" value="the cdc50 p-type atpase lipid flippase subunit (cdc50) family"/>
</dbReference>
<dbReference type="GlyCosmos" id="Q3MIR4">
    <property type="glycosylation" value="3 sites, No reported glycans"/>
</dbReference>
<dbReference type="GlyGen" id="Q3MIR4">
    <property type="glycosylation" value="5 sites, 4 N-linked glycans (3 sites)"/>
</dbReference>
<dbReference type="iPTMnet" id="Q3MIR4"/>
<dbReference type="PhosphoSitePlus" id="Q3MIR4"/>
<dbReference type="BioMuta" id="TMEM30B"/>
<dbReference type="DMDM" id="109819759"/>
<dbReference type="jPOST" id="Q3MIR4"/>
<dbReference type="MassIVE" id="Q3MIR4"/>
<dbReference type="PaxDb" id="9606-ENSP00000450842"/>
<dbReference type="PeptideAtlas" id="Q3MIR4"/>
<dbReference type="ProteomicsDB" id="61791"/>
<dbReference type="Antibodypedia" id="24420">
    <property type="antibodies" value="121 antibodies from 25 providers"/>
</dbReference>
<dbReference type="DNASU" id="161291"/>
<dbReference type="Ensembl" id="ENST00000555868.2">
    <property type="protein sequence ID" value="ENSP00000450842.1"/>
    <property type="gene ID" value="ENSG00000182107.7"/>
</dbReference>
<dbReference type="GeneID" id="161291"/>
<dbReference type="KEGG" id="hsa:161291"/>
<dbReference type="MANE-Select" id="ENST00000555868.2">
    <property type="protein sequence ID" value="ENSP00000450842.1"/>
    <property type="RefSeq nucleotide sequence ID" value="NM_001017970.3"/>
    <property type="RefSeq protein sequence ID" value="NP_001017970.1"/>
</dbReference>
<dbReference type="UCSC" id="uc001xfl.4">
    <property type="organism name" value="human"/>
</dbReference>
<dbReference type="AGR" id="HGNC:27254"/>
<dbReference type="CTD" id="161291"/>
<dbReference type="DisGeNET" id="161291"/>
<dbReference type="GeneCards" id="TMEM30B"/>
<dbReference type="HGNC" id="HGNC:27254">
    <property type="gene designation" value="TMEM30B"/>
</dbReference>
<dbReference type="HPA" id="ENSG00000182107">
    <property type="expression patterns" value="Low tissue specificity"/>
</dbReference>
<dbReference type="MIM" id="611029">
    <property type="type" value="gene"/>
</dbReference>
<dbReference type="neXtProt" id="NX_Q3MIR4"/>
<dbReference type="OpenTargets" id="ENSG00000182107"/>
<dbReference type="PharmGKB" id="PA134993260"/>
<dbReference type="VEuPathDB" id="HostDB:ENSG00000182107"/>
<dbReference type="eggNOG" id="KOG2952">
    <property type="taxonomic scope" value="Eukaryota"/>
</dbReference>
<dbReference type="GeneTree" id="ENSGT00390000004660"/>
<dbReference type="HOGENOM" id="CLU_025025_1_0_1"/>
<dbReference type="InParanoid" id="Q3MIR4"/>
<dbReference type="OMA" id="WWTDTNV"/>
<dbReference type="OrthoDB" id="340608at2759"/>
<dbReference type="PAN-GO" id="Q3MIR4">
    <property type="GO annotations" value="4 GO annotations based on evolutionary models"/>
</dbReference>
<dbReference type="PhylomeDB" id="Q3MIR4"/>
<dbReference type="TreeFam" id="TF300873"/>
<dbReference type="PathwayCommons" id="Q3MIR4"/>
<dbReference type="SignaLink" id="Q3MIR4"/>
<dbReference type="BioGRID-ORCS" id="161291">
    <property type="hits" value="17 hits in 1155 CRISPR screens"/>
</dbReference>
<dbReference type="ChiTaRS" id="TMEM30B">
    <property type="organism name" value="human"/>
</dbReference>
<dbReference type="GenomeRNAi" id="161291"/>
<dbReference type="Pharos" id="Q3MIR4">
    <property type="development level" value="Tbio"/>
</dbReference>
<dbReference type="PRO" id="PR:Q3MIR4"/>
<dbReference type="Proteomes" id="UP000005640">
    <property type="component" value="Chromosome 14"/>
</dbReference>
<dbReference type="RNAct" id="Q3MIR4">
    <property type="molecule type" value="protein"/>
</dbReference>
<dbReference type="Bgee" id="ENSG00000182107">
    <property type="expression patterns" value="Expressed in mucosa of sigmoid colon and 156 other cell types or tissues"/>
</dbReference>
<dbReference type="GO" id="GO:0005783">
    <property type="term" value="C:endoplasmic reticulum"/>
    <property type="evidence" value="ECO:0000318"/>
    <property type="project" value="GO_Central"/>
</dbReference>
<dbReference type="GO" id="GO:0005794">
    <property type="term" value="C:Golgi apparatus"/>
    <property type="evidence" value="ECO:0000318"/>
    <property type="project" value="GO_Central"/>
</dbReference>
<dbReference type="GO" id="GO:1990531">
    <property type="term" value="C:phospholipid-translocating ATPase complex"/>
    <property type="evidence" value="ECO:0000353"/>
    <property type="project" value="ComplexPortal"/>
</dbReference>
<dbReference type="GO" id="GO:0005886">
    <property type="term" value="C:plasma membrane"/>
    <property type="evidence" value="ECO:0000314"/>
    <property type="project" value="ComplexPortal"/>
</dbReference>
<dbReference type="GO" id="GO:0015247">
    <property type="term" value="F:aminophospholipid flippase activity"/>
    <property type="evidence" value="ECO:0000314"/>
    <property type="project" value="BHF-UCL"/>
</dbReference>
<dbReference type="GO" id="GO:0015917">
    <property type="term" value="P:aminophospholipid transport"/>
    <property type="evidence" value="ECO:0000314"/>
    <property type="project" value="BHF-UCL"/>
</dbReference>
<dbReference type="GO" id="GO:0045332">
    <property type="term" value="P:phospholipid translocation"/>
    <property type="evidence" value="ECO:0000318"/>
    <property type="project" value="GO_Central"/>
</dbReference>
<dbReference type="GO" id="GO:0070863">
    <property type="term" value="P:positive regulation of protein exit from endoplasmic reticulum"/>
    <property type="evidence" value="ECO:0000314"/>
    <property type="project" value="UniProtKB"/>
</dbReference>
<dbReference type="InterPro" id="IPR005045">
    <property type="entry name" value="CDC50/LEM3_fam"/>
</dbReference>
<dbReference type="PANTHER" id="PTHR10926">
    <property type="entry name" value="CELL CYCLE CONTROL PROTEIN 50"/>
    <property type="match status" value="1"/>
</dbReference>
<dbReference type="PANTHER" id="PTHR10926:SF19">
    <property type="entry name" value="CELL CYCLE CONTROL PROTEIN 50B"/>
    <property type="match status" value="1"/>
</dbReference>
<dbReference type="Pfam" id="PF03381">
    <property type="entry name" value="CDC50"/>
    <property type="match status" value="1"/>
</dbReference>
<dbReference type="PIRSF" id="PIRSF015840">
    <property type="entry name" value="DUF284_TM_euk"/>
    <property type="match status" value="1"/>
</dbReference>
<organism>
    <name type="scientific">Homo sapiens</name>
    <name type="common">Human</name>
    <dbReference type="NCBI Taxonomy" id="9606"/>
    <lineage>
        <taxon>Eukaryota</taxon>
        <taxon>Metazoa</taxon>
        <taxon>Chordata</taxon>
        <taxon>Craniata</taxon>
        <taxon>Vertebrata</taxon>
        <taxon>Euteleostomi</taxon>
        <taxon>Mammalia</taxon>
        <taxon>Eutheria</taxon>
        <taxon>Euarchontoglires</taxon>
        <taxon>Primates</taxon>
        <taxon>Haplorrhini</taxon>
        <taxon>Catarrhini</taxon>
        <taxon>Hominidae</taxon>
        <taxon>Homo</taxon>
    </lineage>
</organism>
<proteinExistence type="evidence at protein level"/>
<evidence type="ECO:0000255" key="1"/>
<evidence type="ECO:0000269" key="2">
    <source>
    </source>
</evidence>
<evidence type="ECO:0000269" key="3">
    <source>
    </source>
</evidence>
<evidence type="ECO:0000269" key="4">
    <source>
    </source>
</evidence>
<evidence type="ECO:0000305" key="5"/>
<evidence type="ECO:0007829" key="6">
    <source>
        <dbReference type="PDB" id="7VGH"/>
    </source>
</evidence>
<feature type="chain" id="PRO_0000244474" description="Cell cycle control protein 50B">
    <location>
        <begin position="1"/>
        <end position="351"/>
    </location>
</feature>
<feature type="topological domain" description="Cytoplasmic" evidence="1">
    <location>
        <begin position="1"/>
        <end position="33"/>
    </location>
</feature>
<feature type="transmembrane region" description="Helical" evidence="1">
    <location>
        <begin position="34"/>
        <end position="54"/>
    </location>
</feature>
<feature type="topological domain" description="Exoplasmic loop" evidence="1">
    <location>
        <begin position="55"/>
        <end position="315"/>
    </location>
</feature>
<feature type="transmembrane region" description="Helical" evidence="1">
    <location>
        <begin position="316"/>
        <end position="336"/>
    </location>
</feature>
<feature type="topological domain" description="Cytoplasmic" evidence="1">
    <location>
        <begin position="337"/>
        <end position="351"/>
    </location>
</feature>
<feature type="glycosylation site" description="N-linked (GlcNAc...) asparagine" evidence="1">
    <location>
        <position position="75"/>
    </location>
</feature>
<feature type="glycosylation site" description="N-linked (GlcNAc...) asparagine" evidence="1">
    <location>
        <position position="213"/>
    </location>
</feature>
<feature type="glycosylation site" description="N-linked (GlcNAc...) asparagine" evidence="1">
    <location>
        <position position="286"/>
    </location>
</feature>
<feature type="turn" evidence="6">
    <location>
        <begin position="17"/>
        <end position="21"/>
    </location>
</feature>
<feature type="helix" evidence="6">
    <location>
        <begin position="32"/>
        <end position="56"/>
    </location>
</feature>
<feature type="helix" evidence="6">
    <location>
        <begin position="76"/>
        <end position="79"/>
    </location>
</feature>
<feature type="strand" evidence="6">
    <location>
        <begin position="87"/>
        <end position="89"/>
    </location>
</feature>
<feature type="strand" evidence="6">
    <location>
        <begin position="95"/>
        <end position="102"/>
    </location>
</feature>
<feature type="strand" evidence="6">
    <location>
        <begin position="108"/>
        <end position="116"/>
    </location>
</feature>
<feature type="helix" evidence="6">
    <location>
        <begin position="122"/>
        <end position="125"/>
    </location>
</feature>
<feature type="helix" evidence="6">
    <location>
        <begin position="130"/>
        <end position="134"/>
    </location>
</feature>
<feature type="turn" evidence="6">
    <location>
        <begin position="137"/>
        <end position="141"/>
    </location>
</feature>
<feature type="helix" evidence="6">
    <location>
        <begin position="148"/>
        <end position="150"/>
    </location>
</feature>
<feature type="strand" evidence="6">
    <location>
        <begin position="159"/>
        <end position="161"/>
    </location>
</feature>
<feature type="helix" evidence="6">
    <location>
        <begin position="164"/>
        <end position="167"/>
    </location>
</feature>
<feature type="strand" evidence="6">
    <location>
        <begin position="174"/>
        <end position="181"/>
    </location>
</feature>
<feature type="helix" evidence="6">
    <location>
        <begin position="201"/>
        <end position="205"/>
    </location>
</feature>
<feature type="strand" evidence="6">
    <location>
        <begin position="212"/>
        <end position="214"/>
    </location>
</feature>
<feature type="helix" evidence="6">
    <location>
        <begin position="217"/>
        <end position="219"/>
    </location>
</feature>
<feature type="helix" evidence="6">
    <location>
        <begin position="233"/>
        <end position="235"/>
    </location>
</feature>
<feature type="strand" evidence="6">
    <location>
        <begin position="236"/>
        <end position="238"/>
    </location>
</feature>
<feature type="helix" evidence="6">
    <location>
        <begin position="248"/>
        <end position="254"/>
    </location>
</feature>
<feature type="strand" evidence="6">
    <location>
        <begin position="257"/>
        <end position="269"/>
    </location>
</feature>
<feature type="strand" evidence="6">
    <location>
        <begin position="280"/>
        <end position="287"/>
    </location>
</feature>
<feature type="turn" evidence="6">
    <location>
        <begin position="294"/>
        <end position="297"/>
    </location>
</feature>
<feature type="strand" evidence="6">
    <location>
        <begin position="299"/>
        <end position="305"/>
    </location>
</feature>
<feature type="helix" evidence="6">
    <location>
        <begin position="316"/>
        <end position="341"/>
    </location>
</feature>
<protein>
    <recommendedName>
        <fullName>Cell cycle control protein 50B</fullName>
    </recommendedName>
    <alternativeName>
        <fullName>P4-ATPase flippase complex beta subunit TMEM30B</fullName>
    </alternativeName>
    <alternativeName>
        <fullName>Transmembrane protein 30B</fullName>
    </alternativeName>
</protein>
<reference key="1">
    <citation type="journal article" date="2004" name="Nat. Genet.">
        <title>Complete sequencing and characterization of 21,243 full-length human cDNAs.</title>
        <authorList>
            <person name="Ota T."/>
            <person name="Suzuki Y."/>
            <person name="Nishikawa T."/>
            <person name="Otsuki T."/>
            <person name="Sugiyama T."/>
            <person name="Irie R."/>
            <person name="Wakamatsu A."/>
            <person name="Hayashi K."/>
            <person name="Sato H."/>
            <person name="Nagai K."/>
            <person name="Kimura K."/>
            <person name="Makita H."/>
            <person name="Sekine M."/>
            <person name="Obayashi M."/>
            <person name="Nishi T."/>
            <person name="Shibahara T."/>
            <person name="Tanaka T."/>
            <person name="Ishii S."/>
            <person name="Yamamoto J."/>
            <person name="Saito K."/>
            <person name="Kawai Y."/>
            <person name="Isono Y."/>
            <person name="Nakamura Y."/>
            <person name="Nagahari K."/>
            <person name="Murakami K."/>
            <person name="Yasuda T."/>
            <person name="Iwayanagi T."/>
            <person name="Wagatsuma M."/>
            <person name="Shiratori A."/>
            <person name="Sudo H."/>
            <person name="Hosoiri T."/>
            <person name="Kaku Y."/>
            <person name="Kodaira H."/>
            <person name="Kondo H."/>
            <person name="Sugawara M."/>
            <person name="Takahashi M."/>
            <person name="Kanda K."/>
            <person name="Yokoi T."/>
            <person name="Furuya T."/>
            <person name="Kikkawa E."/>
            <person name="Omura Y."/>
            <person name="Abe K."/>
            <person name="Kamihara K."/>
            <person name="Katsuta N."/>
            <person name="Sato K."/>
            <person name="Tanikawa M."/>
            <person name="Yamazaki M."/>
            <person name="Ninomiya K."/>
            <person name="Ishibashi T."/>
            <person name="Yamashita H."/>
            <person name="Murakawa K."/>
            <person name="Fujimori K."/>
            <person name="Tanai H."/>
            <person name="Kimata M."/>
            <person name="Watanabe M."/>
            <person name="Hiraoka S."/>
            <person name="Chiba Y."/>
            <person name="Ishida S."/>
            <person name="Ono Y."/>
            <person name="Takiguchi S."/>
            <person name="Watanabe S."/>
            <person name="Yosida M."/>
            <person name="Hotuta T."/>
            <person name="Kusano J."/>
            <person name="Kanehori K."/>
            <person name="Takahashi-Fujii A."/>
            <person name="Hara H."/>
            <person name="Tanase T.-O."/>
            <person name="Nomura Y."/>
            <person name="Togiya S."/>
            <person name="Komai F."/>
            <person name="Hara R."/>
            <person name="Takeuchi K."/>
            <person name="Arita M."/>
            <person name="Imose N."/>
            <person name="Musashino K."/>
            <person name="Yuuki H."/>
            <person name="Oshima A."/>
            <person name="Sasaki N."/>
            <person name="Aotsuka S."/>
            <person name="Yoshikawa Y."/>
            <person name="Matsunawa H."/>
            <person name="Ichihara T."/>
            <person name="Shiohata N."/>
            <person name="Sano S."/>
            <person name="Moriya S."/>
            <person name="Momiyama H."/>
            <person name="Satoh N."/>
            <person name="Takami S."/>
            <person name="Terashima Y."/>
            <person name="Suzuki O."/>
            <person name="Nakagawa S."/>
            <person name="Senoh A."/>
            <person name="Mizoguchi H."/>
            <person name="Goto Y."/>
            <person name="Shimizu F."/>
            <person name="Wakebe H."/>
            <person name="Hishigaki H."/>
            <person name="Watanabe T."/>
            <person name="Sugiyama A."/>
            <person name="Takemoto M."/>
            <person name="Kawakami B."/>
            <person name="Yamazaki M."/>
            <person name="Watanabe K."/>
            <person name="Kumagai A."/>
            <person name="Itakura S."/>
            <person name="Fukuzumi Y."/>
            <person name="Fujimori Y."/>
            <person name="Komiyama M."/>
            <person name="Tashiro H."/>
            <person name="Tanigami A."/>
            <person name="Fujiwara T."/>
            <person name="Ono T."/>
            <person name="Yamada K."/>
            <person name="Fujii Y."/>
            <person name="Ozaki K."/>
            <person name="Hirao M."/>
            <person name="Ohmori Y."/>
            <person name="Kawabata A."/>
            <person name="Hikiji T."/>
            <person name="Kobatake N."/>
            <person name="Inagaki H."/>
            <person name="Ikema Y."/>
            <person name="Okamoto S."/>
            <person name="Okitani R."/>
            <person name="Kawakami T."/>
            <person name="Noguchi S."/>
            <person name="Itoh T."/>
            <person name="Shigeta K."/>
            <person name="Senba T."/>
            <person name="Matsumura K."/>
            <person name="Nakajima Y."/>
            <person name="Mizuno T."/>
            <person name="Morinaga M."/>
            <person name="Sasaki M."/>
            <person name="Togashi T."/>
            <person name="Oyama M."/>
            <person name="Hata H."/>
            <person name="Watanabe M."/>
            <person name="Komatsu T."/>
            <person name="Mizushima-Sugano J."/>
            <person name="Satoh T."/>
            <person name="Shirai Y."/>
            <person name="Takahashi Y."/>
            <person name="Nakagawa K."/>
            <person name="Okumura K."/>
            <person name="Nagase T."/>
            <person name="Nomura N."/>
            <person name="Kikuchi H."/>
            <person name="Masuho Y."/>
            <person name="Yamashita R."/>
            <person name="Nakai K."/>
            <person name="Yada T."/>
            <person name="Nakamura Y."/>
            <person name="Ohara O."/>
            <person name="Isogai T."/>
            <person name="Sugano S."/>
        </authorList>
    </citation>
    <scope>NUCLEOTIDE SEQUENCE [LARGE SCALE MRNA]</scope>
    <source>
        <tissue>Tongue</tissue>
    </source>
</reference>
<reference key="2">
    <citation type="submission" date="2005-07" db="EMBL/GenBank/DDBJ databases">
        <authorList>
            <person name="Mural R.J."/>
            <person name="Istrail S."/>
            <person name="Sutton G.G."/>
            <person name="Florea L."/>
            <person name="Halpern A.L."/>
            <person name="Mobarry C.M."/>
            <person name="Lippert R."/>
            <person name="Walenz B."/>
            <person name="Shatkay H."/>
            <person name="Dew I."/>
            <person name="Miller J.R."/>
            <person name="Flanigan M.J."/>
            <person name="Edwards N.J."/>
            <person name="Bolanos R."/>
            <person name="Fasulo D."/>
            <person name="Halldorsson B.V."/>
            <person name="Hannenhalli S."/>
            <person name="Turner R."/>
            <person name="Yooseph S."/>
            <person name="Lu F."/>
            <person name="Nusskern D.R."/>
            <person name="Shue B.C."/>
            <person name="Zheng X.H."/>
            <person name="Zhong F."/>
            <person name="Delcher A.L."/>
            <person name="Huson D.H."/>
            <person name="Kravitz S.A."/>
            <person name="Mouchard L."/>
            <person name="Reinert K."/>
            <person name="Remington K.A."/>
            <person name="Clark A.G."/>
            <person name="Waterman M.S."/>
            <person name="Eichler E.E."/>
            <person name="Adams M.D."/>
            <person name="Hunkapiller M.W."/>
            <person name="Myers E.W."/>
            <person name="Venter J.C."/>
        </authorList>
    </citation>
    <scope>NUCLEOTIDE SEQUENCE [LARGE SCALE GENOMIC DNA]</scope>
</reference>
<reference key="3">
    <citation type="journal article" date="2004" name="Genome Res.">
        <title>The status, quality, and expansion of the NIH full-length cDNA project: the Mammalian Gene Collection (MGC).</title>
        <authorList>
            <consortium name="The MGC Project Team"/>
        </authorList>
    </citation>
    <scope>NUCLEOTIDE SEQUENCE [LARGE SCALE MRNA]</scope>
    <source>
        <tissue>Heart</tissue>
        <tissue>Lung</tissue>
    </source>
</reference>
<reference key="4">
    <citation type="journal article" date="2004" name="Oncol. Rep.">
        <title>Identification and characterization of CDC50A, CDC50B and CDC50C genes in silico.</title>
        <authorList>
            <person name="Katoh Y."/>
            <person name="Katoh M."/>
        </authorList>
    </citation>
    <scope>IDENTIFICATION</scope>
</reference>
<reference key="5">
    <citation type="journal article" date="2010" name="J. Biol. Chem.">
        <title>Heteromeric interactions required for abundance and subcellular localization of human CDC50 proteins and class 1 P4-ATPases.</title>
        <authorList>
            <person name="van der Velden L.M."/>
            <person name="Wichers C.G."/>
            <person name="van Breevoort A.E."/>
            <person name="Coleman J.A."/>
            <person name="Molday R.S."/>
            <person name="Berger R."/>
            <person name="Klomp L.W."/>
            <person name="van de Graaf S.F."/>
        </authorList>
    </citation>
    <scope>INTERACTION WITH ATP8B1 AND ATP8B2</scope>
</reference>
<reference key="6">
    <citation type="journal article" date="2010" name="J. Biol. Chem.">
        <title>CDC50 proteins are critical components of the human class-1 P4-ATPase transport machinery.</title>
        <authorList>
            <person name="Bryde S."/>
            <person name="Hennrich H."/>
            <person name="Verhulst P.M."/>
            <person name="Devaux P.F."/>
            <person name="Lenoir G."/>
            <person name="Holthuis J.C."/>
        </authorList>
    </citation>
    <scope>FUNCTION</scope>
    <scope>SUBCELLULAR LOCATION</scope>
    <scope>INTERACTION WITH ATP8A1; ATP8B1; ATP8B2 AND ATP8B4</scope>
</reference>
<reference key="7">
    <citation type="journal article" date="2011" name="J. Biol. Chem.">
        <title>ATP9B, a P4-ATPase (a putative aminophospholipid translocase), localizes to the trans-Golgi network in a CDC50 protein-independent manner.</title>
        <authorList>
            <person name="Takatsu H."/>
            <person name="Baba K."/>
            <person name="Shima T."/>
            <person name="Umino H."/>
            <person name="Kato U."/>
            <person name="Umeda M."/>
            <person name="Nakayama K."/>
            <person name="Shin H.W."/>
        </authorList>
    </citation>
    <scope>INTERACTION WITH ATP8B1</scope>
</reference>